<feature type="chain" id="PRO_0000123540" description="Eukaryotic translation initiation factor 3 subunit A">
    <location>
        <begin position="1"/>
        <end position="987"/>
    </location>
</feature>
<feature type="domain" description="PCI" evidence="2">
    <location>
        <begin position="316"/>
        <end position="513"/>
    </location>
</feature>
<feature type="region of interest" description="Disordered" evidence="3">
    <location>
        <begin position="808"/>
        <end position="987"/>
    </location>
</feature>
<feature type="coiled-coil region" evidence="1">
    <location>
        <begin position="93"/>
        <end position="122"/>
    </location>
</feature>
<feature type="coiled-coil region" evidence="1">
    <location>
        <begin position="556"/>
        <end position="742"/>
    </location>
</feature>
<feature type="coiled-coil region" evidence="1">
    <location>
        <begin position="797"/>
        <end position="858"/>
    </location>
</feature>
<feature type="compositionally biased region" description="Basic and acidic residues" evidence="3">
    <location>
        <begin position="808"/>
        <end position="859"/>
    </location>
</feature>
<feature type="compositionally biased region" description="Low complexity" evidence="3">
    <location>
        <begin position="872"/>
        <end position="894"/>
    </location>
</feature>
<feature type="compositionally biased region" description="Polar residues" evidence="3">
    <location>
        <begin position="905"/>
        <end position="916"/>
    </location>
</feature>
<feature type="compositionally biased region" description="Polar residues" evidence="3">
    <location>
        <begin position="976"/>
        <end position="987"/>
    </location>
</feature>
<proteinExistence type="evidence at protein level"/>
<gene>
    <name type="primary">TIF3A1</name>
    <name type="ordered locus">At4g11420</name>
    <name type="ORF">F25E4.40</name>
</gene>
<organism>
    <name type="scientific">Arabidopsis thaliana</name>
    <name type="common">Mouse-ear cress</name>
    <dbReference type="NCBI Taxonomy" id="3702"/>
    <lineage>
        <taxon>Eukaryota</taxon>
        <taxon>Viridiplantae</taxon>
        <taxon>Streptophyta</taxon>
        <taxon>Embryophyta</taxon>
        <taxon>Tracheophyta</taxon>
        <taxon>Spermatophyta</taxon>
        <taxon>Magnoliopsida</taxon>
        <taxon>eudicotyledons</taxon>
        <taxon>Gunneridae</taxon>
        <taxon>Pentapetalae</taxon>
        <taxon>rosids</taxon>
        <taxon>malvids</taxon>
        <taxon>Brassicales</taxon>
        <taxon>Brassicaceae</taxon>
        <taxon>Camelineae</taxon>
        <taxon>Arabidopsis</taxon>
    </lineage>
</organism>
<protein>
    <recommendedName>
        <fullName evidence="1">Eukaryotic translation initiation factor 3 subunit A</fullName>
        <shortName evidence="1">eIF3a</shortName>
    </recommendedName>
    <alternativeName>
        <fullName>Eukaryotic translation initiation factor 3 large subunit</fullName>
    </alternativeName>
    <alternativeName>
        <fullName evidence="1">Eukaryotic translation initiation factor 3 subunit 10</fullName>
    </alternativeName>
    <alternativeName>
        <fullName evidence="1">eIF-3-theta</fullName>
    </alternativeName>
    <alternativeName>
        <fullName>p114</fullName>
    </alternativeName>
</protein>
<sequence>MANFAKPENALKRADELINVGQKQDALQALHDLITSKRYRAWQKPLEKIMFKYLDLCVDLKRGRFAKDGLIQYRIVCQQVNVSSLEEVIKHFLHLATDKAEQARSQADALEEALDVDDLEADRKPEDLQLSIVSGEKGKDRSDRELVTPWFKFLWETYRTVLEILRNNSKLEALYAMTAHKAFQFCKQYKRTTEFRRLCEIIRNHLANLNKYRDQRDRPDLSAPESLQLYLDTRFDQLKVATELGLWQEAFRSVEDIYGLMCMVKKTPKSSLLMVYYSKLTEIFWISSSHLYHAYAWFKLFSLQKNFNKNLSQKDLQLIASSVVLAALSIPPFDRAQSASHMELENEKERNLRMANLIGFNLEPKFEGKDMLSRSALLSELVSKGVLSCASQEVKDLFHVLEHEFHPLDLGSKIQPLLEKISKSGGKLSSAPSLPEVQLSQYVPSLEKLATLRLLQQVSKIYQTIRIESLSQLVPFFQFSEVEKISVDAVKNNFVAMKVDHMKGVVIFGNLGIESDGLRDHLAVFAESLSKVRAMLYPVPSKASKLAGVIPNLADTVEKEHKRLLARKSIIEKRKEDQERQQLEMEREEEQKRLKLQKLTEEAEQKRLAAELAERRKQRILREIEEKELEEAQALLEETEKRMKKGKKKPLLDGEKVTKQSVKERALTEQLKERQEMEKKLQKLAKTMDYLERAKREEAAPLIEAAYQRRLVEEREFYEREQQREVELSKERHESDLKEKNRLSRMLGNKEIFQAQVISRRQAEFDRIRTEREERISKIIREKKQERDIKRKQIYYLKIEEERIRKLQEEEEARKQEEAERLKKVEAERKANLDKAFEKQRQREIELEEKSRREREELLRGTNAPPARLAEPTVTPVGTTAPAAAAAAAGAPAAPYVPKWKRQTTEVSGPSAPTSSETDRRSNRGPPPGDDHWGSNRGAAQNTDRWTSNRERSGPPAEGGDRWGSGPRGSDDRRSTFGSSRPRPTQR</sequence>
<name>EIF3A_ARATH</name>
<dbReference type="EMBL" id="AF291711">
    <property type="protein sequence ID" value="AAG53635.1"/>
    <property type="molecule type" value="mRNA"/>
</dbReference>
<dbReference type="EMBL" id="AL050399">
    <property type="protein sequence ID" value="CAB82147.1"/>
    <property type="molecule type" value="Genomic_DNA"/>
</dbReference>
<dbReference type="EMBL" id="AL161531">
    <property type="protein sequence ID" value="CAB81243.1"/>
    <property type="molecule type" value="Genomic_DNA"/>
</dbReference>
<dbReference type="EMBL" id="CP002687">
    <property type="protein sequence ID" value="AEE83010.1"/>
    <property type="molecule type" value="Genomic_DNA"/>
</dbReference>
<dbReference type="PIR" id="T10562">
    <property type="entry name" value="T10562"/>
</dbReference>
<dbReference type="SMR" id="Q9LD55"/>
<dbReference type="BioGRID" id="12045">
    <property type="interactions" value="35"/>
</dbReference>
<dbReference type="FunCoup" id="Q9LD55">
    <property type="interactions" value="4820"/>
</dbReference>
<dbReference type="IntAct" id="Q9LD55">
    <property type="interactions" value="1"/>
</dbReference>
<dbReference type="MINT" id="Q9LD55"/>
<dbReference type="STRING" id="3702.Q9LD55"/>
<dbReference type="GlyGen" id="Q9LD55">
    <property type="glycosylation" value="2 sites, 1 O-linked glycan (2 sites)"/>
</dbReference>
<dbReference type="iPTMnet" id="Q9LD55"/>
<dbReference type="SwissPalm" id="Q9LD55"/>
<dbReference type="PaxDb" id="3702-AT4G11420.1"/>
<dbReference type="ProteomicsDB" id="221937"/>
<dbReference type="EnsemblPlants" id="AT4G11420.1">
    <property type="protein sequence ID" value="AT4G11420.1"/>
    <property type="gene ID" value="AT4G11420"/>
</dbReference>
<dbReference type="GeneID" id="826746"/>
<dbReference type="Gramene" id="AT4G11420.1">
    <property type="protein sequence ID" value="AT4G11420.1"/>
    <property type="gene ID" value="AT4G11420"/>
</dbReference>
<dbReference type="KEGG" id="ath:AT4G11420"/>
<dbReference type="Araport" id="AT4G11420"/>
<dbReference type="TAIR" id="AT4G11420">
    <property type="gene designation" value="EIF3A"/>
</dbReference>
<dbReference type="eggNOG" id="KOG2072">
    <property type="taxonomic scope" value="Eukaryota"/>
</dbReference>
<dbReference type="HOGENOM" id="CLU_002096_1_1_1"/>
<dbReference type="InParanoid" id="Q9LD55"/>
<dbReference type="OMA" id="EHITNKR"/>
<dbReference type="PhylomeDB" id="Q9LD55"/>
<dbReference type="PRO" id="PR:Q9LD55"/>
<dbReference type="Proteomes" id="UP000006548">
    <property type="component" value="Chromosome 4"/>
</dbReference>
<dbReference type="ExpressionAtlas" id="Q9LD55">
    <property type="expression patterns" value="baseline and differential"/>
</dbReference>
<dbReference type="GO" id="GO:0005829">
    <property type="term" value="C:cytosol"/>
    <property type="evidence" value="ECO:0007005"/>
    <property type="project" value="TAIR"/>
</dbReference>
<dbReference type="GO" id="GO:0016282">
    <property type="term" value="C:eukaryotic 43S preinitiation complex"/>
    <property type="evidence" value="ECO:0007669"/>
    <property type="project" value="UniProtKB-UniRule"/>
</dbReference>
<dbReference type="GO" id="GO:0033290">
    <property type="term" value="C:eukaryotic 48S preinitiation complex"/>
    <property type="evidence" value="ECO:0007669"/>
    <property type="project" value="UniProtKB-UniRule"/>
</dbReference>
<dbReference type="GO" id="GO:0005852">
    <property type="term" value="C:eukaryotic translation initiation factor 3 complex"/>
    <property type="evidence" value="ECO:0000250"/>
    <property type="project" value="TAIR"/>
</dbReference>
<dbReference type="GO" id="GO:0003729">
    <property type="term" value="F:mRNA binding"/>
    <property type="evidence" value="ECO:0000314"/>
    <property type="project" value="TAIR"/>
</dbReference>
<dbReference type="GO" id="GO:0003743">
    <property type="term" value="F:translation initiation factor activity"/>
    <property type="evidence" value="ECO:0000250"/>
    <property type="project" value="TAIR"/>
</dbReference>
<dbReference type="GO" id="GO:0001732">
    <property type="term" value="P:formation of cytoplasmic translation initiation complex"/>
    <property type="evidence" value="ECO:0007669"/>
    <property type="project" value="UniProtKB-UniRule"/>
</dbReference>
<dbReference type="GO" id="GO:0006413">
    <property type="term" value="P:translational initiation"/>
    <property type="evidence" value="ECO:0000304"/>
    <property type="project" value="TAIR"/>
</dbReference>
<dbReference type="FunFam" id="1.25.40.860:FF:000004">
    <property type="entry name" value="Eukaryotic translation initiation factor 3 subunit A"/>
    <property type="match status" value="1"/>
</dbReference>
<dbReference type="FunFam" id="1.25.40.860:FF:000006">
    <property type="entry name" value="Eukaryotic translation initiation factor 3 subunit A"/>
    <property type="match status" value="1"/>
</dbReference>
<dbReference type="FunFam" id="4.10.860.10:FF:000001">
    <property type="entry name" value="Eukaryotic translation initiation factor 3 subunit A"/>
    <property type="match status" value="1"/>
</dbReference>
<dbReference type="Gene3D" id="1.25.40.860">
    <property type="match status" value="2"/>
</dbReference>
<dbReference type="Gene3D" id="4.10.860.10">
    <property type="entry name" value="UVR domain"/>
    <property type="match status" value="1"/>
</dbReference>
<dbReference type="HAMAP" id="MF_03000">
    <property type="entry name" value="eIF3a"/>
    <property type="match status" value="1"/>
</dbReference>
<dbReference type="InterPro" id="IPR027512">
    <property type="entry name" value="EIF3A"/>
</dbReference>
<dbReference type="InterPro" id="IPR054711">
    <property type="entry name" value="eIF3a_PCI_TPR-like"/>
</dbReference>
<dbReference type="InterPro" id="IPR000717">
    <property type="entry name" value="PCI_dom"/>
</dbReference>
<dbReference type="PANTHER" id="PTHR14005:SF0">
    <property type="entry name" value="EUKARYOTIC TRANSLATION INITIATION FACTOR 3 SUBUNIT A"/>
    <property type="match status" value="1"/>
</dbReference>
<dbReference type="PANTHER" id="PTHR14005">
    <property type="entry name" value="EUKARYOTIC TRANSLATION INITIATION FACTOR 3, THETA SUBUNIT"/>
    <property type="match status" value="1"/>
</dbReference>
<dbReference type="Pfam" id="PF22591">
    <property type="entry name" value="eIF3a_PCI_TPR-like"/>
    <property type="match status" value="1"/>
</dbReference>
<dbReference type="Pfam" id="PF01399">
    <property type="entry name" value="PCI"/>
    <property type="match status" value="1"/>
</dbReference>
<dbReference type="SMART" id="SM00088">
    <property type="entry name" value="PINT"/>
    <property type="match status" value="1"/>
</dbReference>
<dbReference type="PROSITE" id="PS50250">
    <property type="entry name" value="PCI"/>
    <property type="match status" value="1"/>
</dbReference>
<keyword id="KW-0175">Coiled coil</keyword>
<keyword id="KW-0963">Cytoplasm</keyword>
<keyword id="KW-0396">Initiation factor</keyword>
<keyword id="KW-0648">Protein biosynthesis</keyword>
<keyword id="KW-1185">Reference proteome</keyword>
<keyword id="KW-0694">RNA-binding</keyword>
<evidence type="ECO:0000255" key="1">
    <source>
        <dbReference type="HAMAP-Rule" id="MF_03000"/>
    </source>
</evidence>
<evidence type="ECO:0000255" key="2">
    <source>
        <dbReference type="PROSITE-ProRule" id="PRU01185"/>
    </source>
</evidence>
<evidence type="ECO:0000256" key="3">
    <source>
        <dbReference type="SAM" id="MobiDB-lite"/>
    </source>
</evidence>
<evidence type="ECO:0000269" key="4">
    <source>
    </source>
</evidence>
<comment type="function">
    <text evidence="1">RNA-binding component of the eukaryotic translation initiation factor 3 (eIF-3) complex, which is involved in protein synthesis of a specialized repertoire of mRNAs and, together with other initiation factors, stimulates binding of mRNA and methionyl-tRNAi to the 40S ribosome. The eIF-3 complex specifically targets and initiates translation of a subset of mRNAs involved in cell proliferation.</text>
</comment>
<comment type="subunit">
    <text evidence="1 4">Component of the eukaryotic translation initiation factor 3 (eIF-3) complex. Binds to the translation initiation factor TIF3H1 (PubMed:15548739).</text>
</comment>
<comment type="interaction">
    <interactant intactId="EBI-7217371">
        <id>Q9LD55</id>
    </interactant>
    <interactant intactId="EBI-7216904">
        <id>F4K210</id>
        <label>MAF19.20</label>
    </interactant>
    <organismsDiffer>false</organismsDiffer>
    <experiments>2</experiments>
</comment>
<comment type="subcellular location">
    <subcellularLocation>
        <location evidence="1">Cytoplasm</location>
    </subcellularLocation>
</comment>
<comment type="similarity">
    <text evidence="1">Belongs to the eIF-3 subunit A family.</text>
</comment>
<reference key="1">
    <citation type="journal article" date="2001" name="J. Biol. Chem.">
        <title>Plant initiation factor 3 subunit composition resembles mammalian initiation factor 3 and has a novel subunit.</title>
        <authorList>
            <person name="Burks E.A."/>
            <person name="Bezerra P.P."/>
            <person name="Le H."/>
            <person name="Gallie D.R."/>
            <person name="Browning K.S."/>
        </authorList>
    </citation>
    <scope>NUCLEOTIDE SEQUENCE [MRNA]</scope>
    <source>
        <strain>cv. Columbia</strain>
    </source>
</reference>
<reference key="2">
    <citation type="journal article" date="1999" name="Nature">
        <title>Sequence and analysis of chromosome 4 of the plant Arabidopsis thaliana.</title>
        <authorList>
            <person name="Mayer K.F.X."/>
            <person name="Schueller C."/>
            <person name="Wambutt R."/>
            <person name="Murphy G."/>
            <person name="Volckaert G."/>
            <person name="Pohl T."/>
            <person name="Duesterhoeft A."/>
            <person name="Stiekema W."/>
            <person name="Entian K.-D."/>
            <person name="Terryn N."/>
            <person name="Harris B."/>
            <person name="Ansorge W."/>
            <person name="Brandt P."/>
            <person name="Grivell L.A."/>
            <person name="Rieger M."/>
            <person name="Weichselgartner M."/>
            <person name="de Simone V."/>
            <person name="Obermaier B."/>
            <person name="Mache R."/>
            <person name="Mueller M."/>
            <person name="Kreis M."/>
            <person name="Delseny M."/>
            <person name="Puigdomenech P."/>
            <person name="Watson M."/>
            <person name="Schmidtheini T."/>
            <person name="Reichert B."/>
            <person name="Portetelle D."/>
            <person name="Perez-Alonso M."/>
            <person name="Boutry M."/>
            <person name="Bancroft I."/>
            <person name="Vos P."/>
            <person name="Hoheisel J."/>
            <person name="Zimmermann W."/>
            <person name="Wedler H."/>
            <person name="Ridley P."/>
            <person name="Langham S.-A."/>
            <person name="McCullagh B."/>
            <person name="Bilham L."/>
            <person name="Robben J."/>
            <person name="van der Schueren J."/>
            <person name="Grymonprez B."/>
            <person name="Chuang Y.-J."/>
            <person name="Vandenbussche F."/>
            <person name="Braeken M."/>
            <person name="Weltjens I."/>
            <person name="Voet M."/>
            <person name="Bastiaens I."/>
            <person name="Aert R."/>
            <person name="Defoor E."/>
            <person name="Weitzenegger T."/>
            <person name="Bothe G."/>
            <person name="Ramsperger U."/>
            <person name="Hilbert H."/>
            <person name="Braun M."/>
            <person name="Holzer E."/>
            <person name="Brandt A."/>
            <person name="Peters S."/>
            <person name="van Staveren M."/>
            <person name="Dirkse W."/>
            <person name="Mooijman P."/>
            <person name="Klein Lankhorst R."/>
            <person name="Rose M."/>
            <person name="Hauf J."/>
            <person name="Koetter P."/>
            <person name="Berneiser S."/>
            <person name="Hempel S."/>
            <person name="Feldpausch M."/>
            <person name="Lamberth S."/>
            <person name="Van den Daele H."/>
            <person name="De Keyser A."/>
            <person name="Buysshaert C."/>
            <person name="Gielen J."/>
            <person name="Villarroel R."/>
            <person name="De Clercq R."/>
            <person name="van Montagu M."/>
            <person name="Rogers J."/>
            <person name="Cronin A."/>
            <person name="Quail M.A."/>
            <person name="Bray-Allen S."/>
            <person name="Clark L."/>
            <person name="Doggett J."/>
            <person name="Hall S."/>
            <person name="Kay M."/>
            <person name="Lennard N."/>
            <person name="McLay K."/>
            <person name="Mayes R."/>
            <person name="Pettett A."/>
            <person name="Rajandream M.A."/>
            <person name="Lyne M."/>
            <person name="Benes V."/>
            <person name="Rechmann S."/>
            <person name="Borkova D."/>
            <person name="Bloecker H."/>
            <person name="Scharfe M."/>
            <person name="Grimm M."/>
            <person name="Loehnert T.-H."/>
            <person name="Dose S."/>
            <person name="de Haan M."/>
            <person name="Maarse A.C."/>
            <person name="Schaefer M."/>
            <person name="Mueller-Auer S."/>
            <person name="Gabel C."/>
            <person name="Fuchs M."/>
            <person name="Fartmann B."/>
            <person name="Granderath K."/>
            <person name="Dauner D."/>
            <person name="Herzl A."/>
            <person name="Neumann S."/>
            <person name="Argiriou A."/>
            <person name="Vitale D."/>
            <person name="Liguori R."/>
            <person name="Piravandi E."/>
            <person name="Massenet O."/>
            <person name="Quigley F."/>
            <person name="Clabauld G."/>
            <person name="Muendlein A."/>
            <person name="Felber R."/>
            <person name="Schnabl S."/>
            <person name="Hiller R."/>
            <person name="Schmidt W."/>
            <person name="Lecharny A."/>
            <person name="Aubourg S."/>
            <person name="Chefdor F."/>
            <person name="Cooke R."/>
            <person name="Berger C."/>
            <person name="Monfort A."/>
            <person name="Casacuberta E."/>
            <person name="Gibbons T."/>
            <person name="Weber N."/>
            <person name="Vandenbol M."/>
            <person name="Bargues M."/>
            <person name="Terol J."/>
            <person name="Torres A."/>
            <person name="Perez-Perez A."/>
            <person name="Purnelle B."/>
            <person name="Bent E."/>
            <person name="Johnson S."/>
            <person name="Tacon D."/>
            <person name="Jesse T."/>
            <person name="Heijnen L."/>
            <person name="Schwarz S."/>
            <person name="Scholler P."/>
            <person name="Heber S."/>
            <person name="Francs P."/>
            <person name="Bielke C."/>
            <person name="Frishman D."/>
            <person name="Haase D."/>
            <person name="Lemcke K."/>
            <person name="Mewes H.-W."/>
            <person name="Stocker S."/>
            <person name="Zaccaria P."/>
            <person name="Bevan M."/>
            <person name="Wilson R.K."/>
            <person name="de la Bastide M."/>
            <person name="Habermann K."/>
            <person name="Parnell L."/>
            <person name="Dedhia N."/>
            <person name="Gnoj L."/>
            <person name="Schutz K."/>
            <person name="Huang E."/>
            <person name="Spiegel L."/>
            <person name="Sekhon M."/>
            <person name="Murray J."/>
            <person name="Sheet P."/>
            <person name="Cordes M."/>
            <person name="Abu-Threideh J."/>
            <person name="Stoneking T."/>
            <person name="Kalicki J."/>
            <person name="Graves T."/>
            <person name="Harmon G."/>
            <person name="Edwards J."/>
            <person name="Latreille P."/>
            <person name="Courtney L."/>
            <person name="Cloud J."/>
            <person name="Abbott A."/>
            <person name="Scott K."/>
            <person name="Johnson D."/>
            <person name="Minx P."/>
            <person name="Bentley D."/>
            <person name="Fulton B."/>
            <person name="Miller N."/>
            <person name="Greco T."/>
            <person name="Kemp K."/>
            <person name="Kramer J."/>
            <person name="Fulton L."/>
            <person name="Mardis E."/>
            <person name="Dante M."/>
            <person name="Pepin K."/>
            <person name="Hillier L.W."/>
            <person name="Nelson J."/>
            <person name="Spieth J."/>
            <person name="Ryan E."/>
            <person name="Andrews S."/>
            <person name="Geisel C."/>
            <person name="Layman D."/>
            <person name="Du H."/>
            <person name="Ali J."/>
            <person name="Berghoff A."/>
            <person name="Jones K."/>
            <person name="Drone K."/>
            <person name="Cotton M."/>
            <person name="Joshu C."/>
            <person name="Antonoiu B."/>
            <person name="Zidanic M."/>
            <person name="Strong C."/>
            <person name="Sun H."/>
            <person name="Lamar B."/>
            <person name="Yordan C."/>
            <person name="Ma P."/>
            <person name="Zhong J."/>
            <person name="Preston R."/>
            <person name="Vil D."/>
            <person name="Shekher M."/>
            <person name="Matero A."/>
            <person name="Shah R."/>
            <person name="Swaby I.K."/>
            <person name="O'Shaughnessy A."/>
            <person name="Rodriguez M."/>
            <person name="Hoffman J."/>
            <person name="Till S."/>
            <person name="Granat S."/>
            <person name="Shohdy N."/>
            <person name="Hasegawa A."/>
            <person name="Hameed A."/>
            <person name="Lodhi M."/>
            <person name="Johnson A."/>
            <person name="Chen E."/>
            <person name="Marra M.A."/>
            <person name="Martienssen R."/>
            <person name="McCombie W.R."/>
        </authorList>
    </citation>
    <scope>NUCLEOTIDE SEQUENCE [LARGE SCALE GENOMIC DNA]</scope>
    <source>
        <strain>cv. Columbia</strain>
    </source>
</reference>
<reference key="3">
    <citation type="journal article" date="2017" name="Plant J.">
        <title>Araport11: a complete reannotation of the Arabidopsis thaliana reference genome.</title>
        <authorList>
            <person name="Cheng C.Y."/>
            <person name="Krishnakumar V."/>
            <person name="Chan A.P."/>
            <person name="Thibaud-Nissen F."/>
            <person name="Schobel S."/>
            <person name="Town C.D."/>
        </authorList>
    </citation>
    <scope>GENOME REANNOTATION</scope>
    <source>
        <strain>cv. Columbia</strain>
    </source>
</reference>
<reference key="4">
    <citation type="journal article" date="2004" name="Plant Cell">
        <title>Translational regulation via 5' mRNA leader sequences revealed by mutational analysis of the Arabidopsis translation initiation factor subunit eIF3h.</title>
        <authorList>
            <person name="Kim T.-H."/>
            <person name="Kim B.-H."/>
            <person name="Yahalom A."/>
            <person name="Chamovitz D.A."/>
            <person name="von Arnim A.G."/>
        </authorList>
    </citation>
    <scope>INTERACTION WITH TIF3H1</scope>
</reference>
<reference key="5">
    <citation type="journal article" date="2007" name="Mol. Cell. Proteomics">
        <title>Multidimensional protein identification technology (MudPIT) analysis of ubiquitinated proteins in plants.</title>
        <authorList>
            <person name="Maor R."/>
            <person name="Jones A."/>
            <person name="Nuehse T.S."/>
            <person name="Studholme D.J."/>
            <person name="Peck S.C."/>
            <person name="Shirasu K."/>
        </authorList>
    </citation>
    <scope>IDENTIFICATION BY MASS SPECTROMETRY [LARGE SCALE ANALYSIS]</scope>
    <source>
        <strain>cv. Landsberg erecta</strain>
    </source>
</reference>
<accession>Q9LD55</accession>